<sequence>MMVSSHLGSPDQAGHVDLASPADPPPPDASASHSPVDMPAPVAAAGSDRQPPIDLTAAAFFDVDNTLVQGSSAVHFGRGLAARHYFTYRDVLGFLYAQAKFQLLGKENSNDVAAGRRKALAFIEGRSVAELVALGEEIYDEIIADKIWDGTRELTQMHLDAGQQVWLITATPYELAATIARRLGLTGALGTVAESVDGIFTGRLVGEILHGTGKAHAVRSLAIREGLNLKRCTAYSDSYNDVPMLSLVGTAVAINPDARLRSLARERGWEIRDFRIARKAARIGVPSALALGAAGGALAALASRRQSR</sequence>
<accession>P9WGJ2</accession>
<accession>L0T6W2</accession>
<accession>P66801</accession>
<accession>Q11169</accession>
<feature type="chain" id="PRO_0000428352" description="Putative hydrolase MT0526">
    <location>
        <begin position="1"/>
        <end position="308"/>
    </location>
</feature>
<feature type="region of interest" description="Disordered" evidence="3">
    <location>
        <begin position="1"/>
        <end position="48"/>
    </location>
</feature>
<feature type="active site" description="Nucleophile" evidence="2">
    <location>
        <position position="62"/>
    </location>
</feature>
<feature type="active site" description="Proton donor" evidence="2">
    <location>
        <position position="64"/>
    </location>
</feature>
<feature type="binding site" evidence="1">
    <location>
        <position position="62"/>
    </location>
    <ligand>
        <name>Mg(2+)</name>
        <dbReference type="ChEBI" id="CHEBI:18420"/>
    </ligand>
</feature>
<feature type="binding site" evidence="1">
    <location>
        <position position="64"/>
    </location>
    <ligand>
        <name>Mg(2+)</name>
        <dbReference type="ChEBI" id="CHEBI:18420"/>
    </ligand>
</feature>
<feature type="binding site" evidence="1">
    <location>
        <position position="237"/>
    </location>
    <ligand>
        <name>Mg(2+)</name>
        <dbReference type="ChEBI" id="CHEBI:18420"/>
    </ligand>
</feature>
<keyword id="KW-0378">Hydrolase</keyword>
<keyword id="KW-0460">Magnesium</keyword>
<keyword id="KW-0479">Metal-binding</keyword>
<keyword id="KW-1185">Reference proteome</keyword>
<comment type="cofactor">
    <cofactor evidence="1">
        <name>Mg(2+)</name>
        <dbReference type="ChEBI" id="CHEBI:18420"/>
    </cofactor>
    <text evidence="1">Binds 1 Mg(2+) ion per subunit.</text>
</comment>
<comment type="similarity">
    <text evidence="4">Belongs to the HAD-like hydrolase superfamily. SerB family.</text>
</comment>
<organism>
    <name type="scientific">Mycobacterium tuberculosis (strain CDC 1551 / Oshkosh)</name>
    <dbReference type="NCBI Taxonomy" id="83331"/>
    <lineage>
        <taxon>Bacteria</taxon>
        <taxon>Bacillati</taxon>
        <taxon>Actinomycetota</taxon>
        <taxon>Actinomycetes</taxon>
        <taxon>Mycobacteriales</taxon>
        <taxon>Mycobacteriaceae</taxon>
        <taxon>Mycobacterium</taxon>
        <taxon>Mycobacterium tuberculosis complex</taxon>
    </lineage>
</organism>
<reference key="1">
    <citation type="journal article" date="2002" name="J. Bacteriol.">
        <title>Whole-genome comparison of Mycobacterium tuberculosis clinical and laboratory strains.</title>
        <authorList>
            <person name="Fleischmann R.D."/>
            <person name="Alland D."/>
            <person name="Eisen J.A."/>
            <person name="Carpenter L."/>
            <person name="White O."/>
            <person name="Peterson J.D."/>
            <person name="DeBoy R.T."/>
            <person name="Dodson R.J."/>
            <person name="Gwinn M.L."/>
            <person name="Haft D.H."/>
            <person name="Hickey E.K."/>
            <person name="Kolonay J.F."/>
            <person name="Nelson W.C."/>
            <person name="Umayam L.A."/>
            <person name="Ermolaeva M.D."/>
            <person name="Salzberg S.L."/>
            <person name="Delcher A."/>
            <person name="Utterback T.R."/>
            <person name="Weidman J.F."/>
            <person name="Khouri H.M."/>
            <person name="Gill J."/>
            <person name="Mikula A."/>
            <person name="Bishai W."/>
            <person name="Jacobs W.R. Jr."/>
            <person name="Venter J.C."/>
            <person name="Fraser C.M."/>
        </authorList>
    </citation>
    <scope>NUCLEOTIDE SEQUENCE [LARGE SCALE GENOMIC DNA]</scope>
    <source>
        <strain>CDC 1551 / Oshkosh</strain>
    </source>
</reference>
<proteinExistence type="inferred from homology"/>
<name>Y505_MYCTO</name>
<dbReference type="EC" id="3.1.-.-"/>
<dbReference type="EMBL" id="AE000516">
    <property type="protein sequence ID" value="AAK44749.1"/>
    <property type="molecule type" value="Genomic_DNA"/>
</dbReference>
<dbReference type="SMR" id="P9WGJ2"/>
<dbReference type="KEGG" id="mtc:MT0526"/>
<dbReference type="HOGENOM" id="CLU_052657_0_1_11"/>
<dbReference type="Proteomes" id="UP000001020">
    <property type="component" value="Chromosome"/>
</dbReference>
<dbReference type="GO" id="GO:0016787">
    <property type="term" value="F:hydrolase activity"/>
    <property type="evidence" value="ECO:0007669"/>
    <property type="project" value="UniProtKB-KW"/>
</dbReference>
<dbReference type="GO" id="GO:0046872">
    <property type="term" value="F:metal ion binding"/>
    <property type="evidence" value="ECO:0007669"/>
    <property type="project" value="UniProtKB-KW"/>
</dbReference>
<dbReference type="CDD" id="cd02612">
    <property type="entry name" value="HAD_PGPPase"/>
    <property type="match status" value="1"/>
</dbReference>
<dbReference type="FunFam" id="3.40.50.1000:FF:000025">
    <property type="entry name" value="HAD hydrolase, family IB"/>
    <property type="match status" value="1"/>
</dbReference>
<dbReference type="Gene3D" id="3.40.50.1000">
    <property type="entry name" value="HAD superfamily/HAD-like"/>
    <property type="match status" value="1"/>
</dbReference>
<dbReference type="Gene3D" id="1.20.1440.100">
    <property type="entry name" value="SG protein - dephosphorylation function"/>
    <property type="match status" value="1"/>
</dbReference>
<dbReference type="InterPro" id="IPR050582">
    <property type="entry name" value="HAD-like_SerB"/>
</dbReference>
<dbReference type="InterPro" id="IPR036412">
    <property type="entry name" value="HAD-like_sf"/>
</dbReference>
<dbReference type="InterPro" id="IPR006385">
    <property type="entry name" value="HAD_hydro_SerB1"/>
</dbReference>
<dbReference type="InterPro" id="IPR023214">
    <property type="entry name" value="HAD_sf"/>
</dbReference>
<dbReference type="NCBIfam" id="TIGR01488">
    <property type="entry name" value="HAD-SF-IB"/>
    <property type="match status" value="1"/>
</dbReference>
<dbReference type="NCBIfam" id="TIGR01490">
    <property type="entry name" value="HAD-SF-IB-hyp1"/>
    <property type="match status" value="1"/>
</dbReference>
<dbReference type="PANTHER" id="PTHR43344">
    <property type="entry name" value="PHOSPHOSERINE PHOSPHATASE"/>
    <property type="match status" value="1"/>
</dbReference>
<dbReference type="PANTHER" id="PTHR43344:SF15">
    <property type="entry name" value="PHOSPHOSERINE PHOSPHATASE SERB1"/>
    <property type="match status" value="1"/>
</dbReference>
<dbReference type="Pfam" id="PF12710">
    <property type="entry name" value="HAD"/>
    <property type="match status" value="1"/>
</dbReference>
<dbReference type="SUPFAM" id="SSF56784">
    <property type="entry name" value="HAD-like"/>
    <property type="match status" value="1"/>
</dbReference>
<evidence type="ECO:0000250" key="1"/>
<evidence type="ECO:0000255" key="2"/>
<evidence type="ECO:0000256" key="3">
    <source>
        <dbReference type="SAM" id="MobiDB-lite"/>
    </source>
</evidence>
<evidence type="ECO:0000305" key="4"/>
<protein>
    <recommendedName>
        <fullName>Putative hydrolase MT0526</fullName>
        <ecNumber>3.1.-.-</ecNumber>
    </recommendedName>
</protein>
<gene>
    <name type="ordered locus">MT0526</name>
</gene>